<feature type="chain" id="PRO_0000258425" description="Phosphoribosylformylglycinamidine cyclo-ligase">
    <location>
        <begin position="1"/>
        <end position="341"/>
    </location>
</feature>
<evidence type="ECO:0000255" key="1">
    <source>
        <dbReference type="HAMAP-Rule" id="MF_00741"/>
    </source>
</evidence>
<gene>
    <name evidence="1" type="primary">purM</name>
    <name type="ordered locus">Synpcc7942_0851</name>
</gene>
<proteinExistence type="inferred from homology"/>
<organism>
    <name type="scientific">Synechococcus elongatus (strain ATCC 33912 / PCC 7942 / FACHB-805)</name>
    <name type="common">Anacystis nidulans R2</name>
    <dbReference type="NCBI Taxonomy" id="1140"/>
    <lineage>
        <taxon>Bacteria</taxon>
        <taxon>Bacillati</taxon>
        <taxon>Cyanobacteriota</taxon>
        <taxon>Cyanophyceae</taxon>
        <taxon>Synechococcales</taxon>
        <taxon>Synechococcaceae</taxon>
        <taxon>Synechococcus</taxon>
    </lineage>
</organism>
<dbReference type="EC" id="6.3.3.1" evidence="1"/>
<dbReference type="EMBL" id="CP000100">
    <property type="protein sequence ID" value="ABB56882.1"/>
    <property type="molecule type" value="Genomic_DNA"/>
</dbReference>
<dbReference type="RefSeq" id="WP_011377763.1">
    <property type="nucleotide sequence ID" value="NZ_JACJTX010000005.1"/>
</dbReference>
<dbReference type="SMR" id="Q31PY7"/>
<dbReference type="STRING" id="1140.Synpcc7942_0851"/>
<dbReference type="PaxDb" id="1140-Synpcc7942_0851"/>
<dbReference type="GeneID" id="72429698"/>
<dbReference type="KEGG" id="syf:Synpcc7942_0851"/>
<dbReference type="eggNOG" id="COG0150">
    <property type="taxonomic scope" value="Bacteria"/>
</dbReference>
<dbReference type="HOGENOM" id="CLU_047116_0_0_3"/>
<dbReference type="OrthoDB" id="9802507at2"/>
<dbReference type="BioCyc" id="SYNEL:SYNPCC7942_0851-MONOMER"/>
<dbReference type="UniPathway" id="UPA00074">
    <property type="reaction ID" value="UER00129"/>
</dbReference>
<dbReference type="Proteomes" id="UP000889800">
    <property type="component" value="Chromosome"/>
</dbReference>
<dbReference type="GO" id="GO:0005829">
    <property type="term" value="C:cytosol"/>
    <property type="evidence" value="ECO:0007669"/>
    <property type="project" value="TreeGrafter"/>
</dbReference>
<dbReference type="GO" id="GO:0005524">
    <property type="term" value="F:ATP binding"/>
    <property type="evidence" value="ECO:0007669"/>
    <property type="project" value="UniProtKB-KW"/>
</dbReference>
<dbReference type="GO" id="GO:0004637">
    <property type="term" value="F:phosphoribosylamine-glycine ligase activity"/>
    <property type="evidence" value="ECO:0007669"/>
    <property type="project" value="TreeGrafter"/>
</dbReference>
<dbReference type="GO" id="GO:0004641">
    <property type="term" value="F:phosphoribosylformylglycinamidine cyclo-ligase activity"/>
    <property type="evidence" value="ECO:0007669"/>
    <property type="project" value="UniProtKB-UniRule"/>
</dbReference>
<dbReference type="GO" id="GO:0006189">
    <property type="term" value="P:'de novo' IMP biosynthetic process"/>
    <property type="evidence" value="ECO:0007669"/>
    <property type="project" value="UniProtKB-UniRule"/>
</dbReference>
<dbReference type="GO" id="GO:0046084">
    <property type="term" value="P:adenine biosynthetic process"/>
    <property type="evidence" value="ECO:0007669"/>
    <property type="project" value="TreeGrafter"/>
</dbReference>
<dbReference type="CDD" id="cd02196">
    <property type="entry name" value="PurM"/>
    <property type="match status" value="1"/>
</dbReference>
<dbReference type="FunFam" id="3.30.1330.10:FF:000001">
    <property type="entry name" value="Phosphoribosylformylglycinamidine cyclo-ligase"/>
    <property type="match status" value="1"/>
</dbReference>
<dbReference type="FunFam" id="3.90.650.10:FF:000001">
    <property type="entry name" value="Phosphoribosylformylglycinamidine cyclo-ligase"/>
    <property type="match status" value="1"/>
</dbReference>
<dbReference type="Gene3D" id="3.90.650.10">
    <property type="entry name" value="PurM-like C-terminal domain"/>
    <property type="match status" value="1"/>
</dbReference>
<dbReference type="Gene3D" id="3.30.1330.10">
    <property type="entry name" value="PurM-like, N-terminal domain"/>
    <property type="match status" value="1"/>
</dbReference>
<dbReference type="HAMAP" id="MF_00741">
    <property type="entry name" value="AIRS"/>
    <property type="match status" value="1"/>
</dbReference>
<dbReference type="InterPro" id="IPR010918">
    <property type="entry name" value="PurM-like_C_dom"/>
</dbReference>
<dbReference type="InterPro" id="IPR036676">
    <property type="entry name" value="PurM-like_C_sf"/>
</dbReference>
<dbReference type="InterPro" id="IPR016188">
    <property type="entry name" value="PurM-like_N"/>
</dbReference>
<dbReference type="InterPro" id="IPR036921">
    <property type="entry name" value="PurM-like_N_sf"/>
</dbReference>
<dbReference type="InterPro" id="IPR004733">
    <property type="entry name" value="PurM_cligase"/>
</dbReference>
<dbReference type="NCBIfam" id="TIGR00878">
    <property type="entry name" value="purM"/>
    <property type="match status" value="1"/>
</dbReference>
<dbReference type="PANTHER" id="PTHR10520:SF12">
    <property type="entry name" value="TRIFUNCTIONAL PURINE BIOSYNTHETIC PROTEIN ADENOSINE-3"/>
    <property type="match status" value="1"/>
</dbReference>
<dbReference type="PANTHER" id="PTHR10520">
    <property type="entry name" value="TRIFUNCTIONAL PURINE BIOSYNTHETIC PROTEIN ADENOSINE-3-RELATED"/>
    <property type="match status" value="1"/>
</dbReference>
<dbReference type="Pfam" id="PF00586">
    <property type="entry name" value="AIRS"/>
    <property type="match status" value="1"/>
</dbReference>
<dbReference type="Pfam" id="PF02769">
    <property type="entry name" value="AIRS_C"/>
    <property type="match status" value="1"/>
</dbReference>
<dbReference type="SUPFAM" id="SSF56042">
    <property type="entry name" value="PurM C-terminal domain-like"/>
    <property type="match status" value="1"/>
</dbReference>
<dbReference type="SUPFAM" id="SSF55326">
    <property type="entry name" value="PurM N-terminal domain-like"/>
    <property type="match status" value="1"/>
</dbReference>
<name>PUR5_SYNE7</name>
<comment type="catalytic activity">
    <reaction evidence="1">
        <text>2-formamido-N(1)-(5-O-phospho-beta-D-ribosyl)acetamidine + ATP = 5-amino-1-(5-phospho-beta-D-ribosyl)imidazole + ADP + phosphate + H(+)</text>
        <dbReference type="Rhea" id="RHEA:23032"/>
        <dbReference type="ChEBI" id="CHEBI:15378"/>
        <dbReference type="ChEBI" id="CHEBI:30616"/>
        <dbReference type="ChEBI" id="CHEBI:43474"/>
        <dbReference type="ChEBI" id="CHEBI:137981"/>
        <dbReference type="ChEBI" id="CHEBI:147287"/>
        <dbReference type="ChEBI" id="CHEBI:456216"/>
        <dbReference type="EC" id="6.3.3.1"/>
    </reaction>
</comment>
<comment type="pathway">
    <text evidence="1">Purine metabolism; IMP biosynthesis via de novo pathway; 5-amino-1-(5-phospho-D-ribosyl)imidazole from N(2)-formyl-N(1)-(5-phospho-D-ribosyl)glycinamide: step 2/2.</text>
</comment>
<comment type="subcellular location">
    <subcellularLocation>
        <location evidence="1">Cytoplasm</location>
    </subcellularLocation>
</comment>
<comment type="similarity">
    <text evidence="1">Belongs to the AIR synthase family.</text>
</comment>
<protein>
    <recommendedName>
        <fullName evidence="1">Phosphoribosylformylglycinamidine cyclo-ligase</fullName>
        <ecNumber evidence="1">6.3.3.1</ecNumber>
    </recommendedName>
    <alternativeName>
        <fullName evidence="1">AIR synthase</fullName>
    </alternativeName>
    <alternativeName>
        <fullName evidence="1">AIRS</fullName>
    </alternativeName>
    <alternativeName>
        <fullName evidence="1">Phosphoribosyl-aminoimidazole synthetase</fullName>
    </alternativeName>
</protein>
<accession>Q31PY7</accession>
<keyword id="KW-0067">ATP-binding</keyword>
<keyword id="KW-0963">Cytoplasm</keyword>
<keyword id="KW-0436">Ligase</keyword>
<keyword id="KW-0547">Nucleotide-binding</keyword>
<keyword id="KW-0658">Purine biosynthesis</keyword>
<keyword id="KW-1185">Reference proteome</keyword>
<reference key="1">
    <citation type="submission" date="2005-08" db="EMBL/GenBank/DDBJ databases">
        <title>Complete sequence of chromosome 1 of Synechococcus elongatus PCC 7942.</title>
        <authorList>
            <consortium name="US DOE Joint Genome Institute"/>
            <person name="Copeland A."/>
            <person name="Lucas S."/>
            <person name="Lapidus A."/>
            <person name="Barry K."/>
            <person name="Detter J.C."/>
            <person name="Glavina T."/>
            <person name="Hammon N."/>
            <person name="Israni S."/>
            <person name="Pitluck S."/>
            <person name="Schmutz J."/>
            <person name="Larimer F."/>
            <person name="Land M."/>
            <person name="Kyrpides N."/>
            <person name="Lykidis A."/>
            <person name="Golden S."/>
            <person name="Richardson P."/>
        </authorList>
    </citation>
    <scope>NUCLEOTIDE SEQUENCE [LARGE SCALE GENOMIC DNA]</scope>
    <source>
        <strain>ATCC 33912 / PCC 7942 / FACHB-805</strain>
    </source>
</reference>
<sequence length="341" mass="35931">MNYREAGVDIEAGRAFVGDIRSLVESTRRPGVLGGLGGFGGFFELPSGYRQPVLVSGTDGVGTKLKIAHQVGRHDSIGIDLVAMCVNDILTAGAEPLYFLDYLATGRLDREQLTAVVQGIAAGCRESGCALLGGETAEMPGFYEAGEYDVAGFAVGIAEKSELLDGSQVQLGDVAIALASSGVHSNGYSLVRKVVANSGLDWTSSQTIFEGQSLGDVFLTPTRLYVKPILAAKAQKIPIHGMAHITGGGLPENLPRCLGPNQTVAIDLESWKWPTVFRWLAKQGNIADSEMFNTFNMGVGLVVIVPAAAETQALKFFKAQGQTAWTLGEVVTGDGTLIGLP</sequence>